<name>IF1_FRATW</name>
<reference key="1">
    <citation type="journal article" date="2007" name="PLoS ONE">
        <title>Complete genomic characterization of a pathogenic A.II strain of Francisella tularensis subspecies tularensis.</title>
        <authorList>
            <person name="Beckstrom-Sternberg S.M."/>
            <person name="Auerbach R.K."/>
            <person name="Godbole S."/>
            <person name="Pearson J.V."/>
            <person name="Beckstrom-Sternberg J.S."/>
            <person name="Deng Z."/>
            <person name="Munk C."/>
            <person name="Kubota K."/>
            <person name="Zhou Y."/>
            <person name="Bruce D."/>
            <person name="Noronha J."/>
            <person name="Scheuermann R.H."/>
            <person name="Wang A."/>
            <person name="Wei X."/>
            <person name="Wang J."/>
            <person name="Hao J."/>
            <person name="Wagner D.M."/>
            <person name="Brettin T.S."/>
            <person name="Brown N."/>
            <person name="Gilna P."/>
            <person name="Keim P.S."/>
        </authorList>
    </citation>
    <scope>NUCLEOTIDE SEQUENCE [LARGE SCALE GENOMIC DNA]</scope>
    <source>
        <strain>WY96-3418</strain>
    </source>
</reference>
<protein>
    <recommendedName>
        <fullName evidence="1">Translation initiation factor IF-1</fullName>
    </recommendedName>
</protein>
<comment type="function">
    <text evidence="1">One of the essential components for the initiation of protein synthesis. Stabilizes the binding of IF-2 and IF-3 on the 30S subunit to which N-formylmethionyl-tRNA(fMet) subsequently binds. Helps modulate mRNA selection, yielding the 30S pre-initiation complex (PIC). Upon addition of the 50S ribosomal subunit IF-1, IF-2 and IF-3 are released leaving the mature 70S translation initiation complex.</text>
</comment>
<comment type="subunit">
    <text evidence="1">Component of the 30S ribosomal translation pre-initiation complex which assembles on the 30S ribosome in the order IF-2 and IF-3, IF-1 and N-formylmethionyl-tRNA(fMet); mRNA recruitment can occur at any time during PIC assembly.</text>
</comment>
<comment type="subcellular location">
    <subcellularLocation>
        <location evidence="1">Cytoplasm</location>
    </subcellularLocation>
</comment>
<comment type="similarity">
    <text evidence="1">Belongs to the IF-1 family.</text>
</comment>
<dbReference type="EMBL" id="CP000608">
    <property type="protein sequence ID" value="ABO46722.1"/>
    <property type="molecule type" value="Genomic_DNA"/>
</dbReference>
<dbReference type="RefSeq" id="WP_003026050.1">
    <property type="nucleotide sequence ID" value="NC_009257.1"/>
</dbReference>
<dbReference type="SMR" id="A4IXS1"/>
<dbReference type="KEGG" id="ftw:FTW_0867"/>
<dbReference type="HOGENOM" id="CLU_151267_1_0_6"/>
<dbReference type="GO" id="GO:0005829">
    <property type="term" value="C:cytosol"/>
    <property type="evidence" value="ECO:0007669"/>
    <property type="project" value="TreeGrafter"/>
</dbReference>
<dbReference type="GO" id="GO:0043022">
    <property type="term" value="F:ribosome binding"/>
    <property type="evidence" value="ECO:0007669"/>
    <property type="project" value="UniProtKB-UniRule"/>
</dbReference>
<dbReference type="GO" id="GO:0019843">
    <property type="term" value="F:rRNA binding"/>
    <property type="evidence" value="ECO:0007669"/>
    <property type="project" value="UniProtKB-UniRule"/>
</dbReference>
<dbReference type="GO" id="GO:0003743">
    <property type="term" value="F:translation initiation factor activity"/>
    <property type="evidence" value="ECO:0007669"/>
    <property type="project" value="UniProtKB-UniRule"/>
</dbReference>
<dbReference type="CDD" id="cd04451">
    <property type="entry name" value="S1_IF1"/>
    <property type="match status" value="1"/>
</dbReference>
<dbReference type="FunFam" id="2.40.50.140:FF:000002">
    <property type="entry name" value="Translation initiation factor IF-1"/>
    <property type="match status" value="1"/>
</dbReference>
<dbReference type="Gene3D" id="2.40.50.140">
    <property type="entry name" value="Nucleic acid-binding proteins"/>
    <property type="match status" value="1"/>
</dbReference>
<dbReference type="HAMAP" id="MF_00075">
    <property type="entry name" value="IF_1"/>
    <property type="match status" value="1"/>
</dbReference>
<dbReference type="InterPro" id="IPR012340">
    <property type="entry name" value="NA-bd_OB-fold"/>
</dbReference>
<dbReference type="InterPro" id="IPR006196">
    <property type="entry name" value="RNA-binding_domain_S1_IF1"/>
</dbReference>
<dbReference type="InterPro" id="IPR003029">
    <property type="entry name" value="S1_domain"/>
</dbReference>
<dbReference type="InterPro" id="IPR004368">
    <property type="entry name" value="TIF_IF1"/>
</dbReference>
<dbReference type="NCBIfam" id="TIGR00008">
    <property type="entry name" value="infA"/>
    <property type="match status" value="1"/>
</dbReference>
<dbReference type="PANTHER" id="PTHR33370">
    <property type="entry name" value="TRANSLATION INITIATION FACTOR IF-1, CHLOROPLASTIC"/>
    <property type="match status" value="1"/>
</dbReference>
<dbReference type="PANTHER" id="PTHR33370:SF1">
    <property type="entry name" value="TRANSLATION INITIATION FACTOR IF-1, CHLOROPLASTIC"/>
    <property type="match status" value="1"/>
</dbReference>
<dbReference type="Pfam" id="PF01176">
    <property type="entry name" value="eIF-1a"/>
    <property type="match status" value="1"/>
</dbReference>
<dbReference type="SMART" id="SM00316">
    <property type="entry name" value="S1"/>
    <property type="match status" value="1"/>
</dbReference>
<dbReference type="SUPFAM" id="SSF50249">
    <property type="entry name" value="Nucleic acid-binding proteins"/>
    <property type="match status" value="1"/>
</dbReference>
<dbReference type="PROSITE" id="PS50832">
    <property type="entry name" value="S1_IF1_TYPE"/>
    <property type="match status" value="1"/>
</dbReference>
<proteinExistence type="inferred from homology"/>
<feature type="chain" id="PRO_0000338829" description="Translation initiation factor IF-1">
    <location>
        <begin position="1"/>
        <end position="72"/>
    </location>
</feature>
<feature type="domain" description="S1-like" evidence="1">
    <location>
        <begin position="1"/>
        <end position="72"/>
    </location>
</feature>
<gene>
    <name evidence="1" type="primary">infA</name>
    <name type="ordered locus">FTW_0867</name>
</gene>
<sequence>MAKEDCIEMEGVVLEVLPNTMFRVELENGRIVTAHISGKMRKNYIRILTGDKVVVEITPYDLTKGRIKFRSK</sequence>
<keyword id="KW-0963">Cytoplasm</keyword>
<keyword id="KW-0396">Initiation factor</keyword>
<keyword id="KW-0648">Protein biosynthesis</keyword>
<keyword id="KW-0694">RNA-binding</keyword>
<keyword id="KW-0699">rRNA-binding</keyword>
<evidence type="ECO:0000255" key="1">
    <source>
        <dbReference type="HAMAP-Rule" id="MF_00075"/>
    </source>
</evidence>
<organism>
    <name type="scientific">Francisella tularensis subsp. tularensis (strain WY96-3418)</name>
    <dbReference type="NCBI Taxonomy" id="418136"/>
    <lineage>
        <taxon>Bacteria</taxon>
        <taxon>Pseudomonadati</taxon>
        <taxon>Pseudomonadota</taxon>
        <taxon>Gammaproteobacteria</taxon>
        <taxon>Thiotrichales</taxon>
        <taxon>Francisellaceae</taxon>
        <taxon>Francisella</taxon>
    </lineage>
</organism>
<accession>A4IXS1</accession>